<feature type="chain" id="PRO_0000066435" description="Uncharacterized protein ORF5B">
    <location>
        <begin position="1"/>
        <end position="451"/>
    </location>
</feature>
<reference key="1">
    <citation type="journal article" date="1992" name="Nucleic Acids Res.">
        <title>Modular organization of related Archaeal plasmids encoding different restriction-modification systems in Methanobacterium thermoformicicum.</title>
        <authorList>
            <person name="Noelling J."/>
            <person name="van Eeden F.J.M."/>
            <person name="Eggen R.I.L."/>
            <person name="de Vos W.M."/>
        </authorList>
    </citation>
    <scope>NUCLEOTIDE SEQUENCE [GENOMIC DNA]</scope>
    <source>
        <strain>DSM 3848 / THF</strain>
    </source>
</reference>
<sequence length="451" mass="49671">MKAWNLDVQNATARVQLPEGLVVQDYYMSQGYYDLETGTWEIGDIPAYEERSLTFICLLNRTGSVTVNANVTADGDDNSANNNAELTFKVFGISDLEVNVTGNKETARIGDTVRITVKLKNRGPHDANNIKIGNFLSGGLVVQNFSYDAGYFDDITREWIFETLAAGEEATLTLDCLVNRTGELSDYVSVREVDEGDVNVYNNMAHASVAVKGTDLDLDLSVSKLRAYQGDVVNVVCRVRNNGPETAQNARVNLQLPGNLQVQHVQLDRGTYSNGVWVIGDLADNETALLNITARVMSAGNFTLNATAVSPAIDDSNPVNNDDTARISVAIPKKTLKVRIKNNSAVTIRVLLYVTVNDHGKITRKTYNFYLKKGLSRDLSLGYFQLGTTALFKQYTYNTNYRSRTVSYENTYNATSVITQRVNVSGVKGRQKAPVVRIATLLLDENGTSLQ</sequence>
<proteinExistence type="predicted"/>
<name>YPV5B_METTF</name>
<comment type="similarity">
    <text evidence="1">To ORF5 in pFZ1.</text>
</comment>
<accession>P29578</accession>
<evidence type="ECO:0000305" key="1"/>
<dbReference type="EMBL" id="X68366">
    <property type="protein sequence ID" value="CAA48430.1"/>
    <property type="molecule type" value="Genomic_DNA"/>
</dbReference>
<dbReference type="PIR" id="S26441">
    <property type="entry name" value="S26441"/>
</dbReference>
<dbReference type="RefSeq" id="NP_039759.1">
    <property type="nucleotide sequence ID" value="NC_001336.1"/>
</dbReference>
<dbReference type="RefSeq" id="WP_010889845.1">
    <property type="nucleotide sequence ID" value="NC_001336.1"/>
</dbReference>
<dbReference type="Gene3D" id="2.60.40.10">
    <property type="entry name" value="Immunoglobulins"/>
    <property type="match status" value="2"/>
</dbReference>
<dbReference type="InterPro" id="IPR051172">
    <property type="entry name" value="Chlamydia_OmcB"/>
</dbReference>
<dbReference type="InterPro" id="IPR047589">
    <property type="entry name" value="DUF11_rpt"/>
</dbReference>
<dbReference type="InterPro" id="IPR013783">
    <property type="entry name" value="Ig-like_fold"/>
</dbReference>
<dbReference type="InterPro" id="IPR001434">
    <property type="entry name" value="OmcB-like_DUF11"/>
</dbReference>
<dbReference type="NCBIfam" id="TIGR01451">
    <property type="entry name" value="B_ant_repeat"/>
    <property type="match status" value="1"/>
</dbReference>
<dbReference type="PANTHER" id="PTHR34819:SF5">
    <property type="entry name" value="CONSERVED REPEAT DOMAIN PROTEIN"/>
    <property type="match status" value="1"/>
</dbReference>
<dbReference type="PANTHER" id="PTHR34819">
    <property type="entry name" value="LARGE CYSTEINE-RICH PERIPLASMIC PROTEIN OMCB"/>
    <property type="match status" value="1"/>
</dbReference>
<dbReference type="Pfam" id="PF01345">
    <property type="entry name" value="DUF11"/>
    <property type="match status" value="3"/>
</dbReference>
<protein>
    <recommendedName>
        <fullName>Uncharacterized protein ORF5B</fullName>
    </recommendedName>
</protein>
<keyword id="KW-0614">Plasmid</keyword>
<geneLocation type="plasmid">
    <name>pFV1</name>
</geneLocation>
<organism>
    <name type="scientific">Methanothermobacter thermautotrophicus</name>
    <name type="common">Methanobacterium thermoformicicum</name>
    <dbReference type="NCBI Taxonomy" id="145262"/>
    <lineage>
        <taxon>Archaea</taxon>
        <taxon>Methanobacteriati</taxon>
        <taxon>Methanobacteriota</taxon>
        <taxon>Methanomada group</taxon>
        <taxon>Methanobacteria</taxon>
        <taxon>Methanobacteriales</taxon>
        <taxon>Methanobacteriaceae</taxon>
        <taxon>Methanothermobacter</taxon>
    </lineage>
</organism>